<organism>
    <name type="scientific">Streptococcus suis (strain 98HAH33)</name>
    <dbReference type="NCBI Taxonomy" id="391296"/>
    <lineage>
        <taxon>Bacteria</taxon>
        <taxon>Bacillati</taxon>
        <taxon>Bacillota</taxon>
        <taxon>Bacilli</taxon>
        <taxon>Lactobacillales</taxon>
        <taxon>Streptococcaceae</taxon>
        <taxon>Streptococcus</taxon>
    </lineage>
</organism>
<reference key="1">
    <citation type="journal article" date="2007" name="PLoS ONE">
        <title>A glimpse of streptococcal toxic shock syndrome from comparative genomics of S. suis 2 Chinese isolates.</title>
        <authorList>
            <person name="Chen C."/>
            <person name="Tang J."/>
            <person name="Dong W."/>
            <person name="Wang C."/>
            <person name="Feng Y."/>
            <person name="Wang J."/>
            <person name="Zheng F."/>
            <person name="Pan X."/>
            <person name="Liu D."/>
            <person name="Li M."/>
            <person name="Song Y."/>
            <person name="Zhu X."/>
            <person name="Sun H."/>
            <person name="Feng T."/>
            <person name="Guo Z."/>
            <person name="Ju A."/>
            <person name="Ge J."/>
            <person name="Dong Y."/>
            <person name="Sun W."/>
            <person name="Jiang Y."/>
            <person name="Wang J."/>
            <person name="Yan J."/>
            <person name="Yang H."/>
            <person name="Wang X."/>
            <person name="Gao G.F."/>
            <person name="Yang R."/>
            <person name="Wang J."/>
            <person name="Yu J."/>
        </authorList>
    </citation>
    <scope>NUCLEOTIDE SEQUENCE [LARGE SCALE GENOMIC DNA]</scope>
    <source>
        <strain>98HAH33</strain>
    </source>
</reference>
<keyword id="KW-0067">ATP-binding</keyword>
<keyword id="KW-0131">Cell cycle</keyword>
<keyword id="KW-0132">Cell division</keyword>
<keyword id="KW-0133">Cell shape</keyword>
<keyword id="KW-0961">Cell wall biogenesis/degradation</keyword>
<keyword id="KW-0963">Cytoplasm</keyword>
<keyword id="KW-0436">Ligase</keyword>
<keyword id="KW-0547">Nucleotide-binding</keyword>
<keyword id="KW-0573">Peptidoglycan synthesis</keyword>
<evidence type="ECO:0000255" key="1">
    <source>
        <dbReference type="HAMAP-Rule" id="MF_00208"/>
    </source>
</evidence>
<dbReference type="EC" id="6.3.2.7" evidence="1"/>
<dbReference type="EMBL" id="CP000408">
    <property type="protein sequence ID" value="ABP91810.1"/>
    <property type="molecule type" value="Genomic_DNA"/>
</dbReference>
<dbReference type="SMR" id="A4W0C1"/>
<dbReference type="KEGG" id="ssv:SSU98_0652"/>
<dbReference type="HOGENOM" id="CLU_022291_4_2_9"/>
<dbReference type="UniPathway" id="UPA00219"/>
<dbReference type="GO" id="GO:0005737">
    <property type="term" value="C:cytoplasm"/>
    <property type="evidence" value="ECO:0007669"/>
    <property type="project" value="UniProtKB-SubCell"/>
</dbReference>
<dbReference type="GO" id="GO:0005524">
    <property type="term" value="F:ATP binding"/>
    <property type="evidence" value="ECO:0007669"/>
    <property type="project" value="UniProtKB-UniRule"/>
</dbReference>
<dbReference type="GO" id="GO:0000287">
    <property type="term" value="F:magnesium ion binding"/>
    <property type="evidence" value="ECO:0007669"/>
    <property type="project" value="UniProtKB-UniRule"/>
</dbReference>
<dbReference type="GO" id="GO:0047482">
    <property type="term" value="F:UDP-N-acetylmuramoyl-L-alanyl-D-glutamate-L-lysine ligase activity"/>
    <property type="evidence" value="ECO:0007669"/>
    <property type="project" value="UniProtKB-UniRule"/>
</dbReference>
<dbReference type="GO" id="GO:0051301">
    <property type="term" value="P:cell division"/>
    <property type="evidence" value="ECO:0007669"/>
    <property type="project" value="UniProtKB-KW"/>
</dbReference>
<dbReference type="GO" id="GO:0071555">
    <property type="term" value="P:cell wall organization"/>
    <property type="evidence" value="ECO:0007669"/>
    <property type="project" value="UniProtKB-KW"/>
</dbReference>
<dbReference type="GO" id="GO:0009252">
    <property type="term" value="P:peptidoglycan biosynthetic process"/>
    <property type="evidence" value="ECO:0007669"/>
    <property type="project" value="UniProtKB-UniRule"/>
</dbReference>
<dbReference type="GO" id="GO:0008360">
    <property type="term" value="P:regulation of cell shape"/>
    <property type="evidence" value="ECO:0007669"/>
    <property type="project" value="UniProtKB-KW"/>
</dbReference>
<dbReference type="Gene3D" id="3.90.190.20">
    <property type="entry name" value="Mur ligase, C-terminal domain"/>
    <property type="match status" value="1"/>
</dbReference>
<dbReference type="Gene3D" id="3.40.1190.10">
    <property type="entry name" value="Mur-like, catalytic domain"/>
    <property type="match status" value="1"/>
</dbReference>
<dbReference type="Gene3D" id="3.40.1390.10">
    <property type="entry name" value="MurE/MurF, N-terminal domain"/>
    <property type="match status" value="1"/>
</dbReference>
<dbReference type="HAMAP" id="MF_00208">
    <property type="entry name" value="MurE"/>
    <property type="match status" value="1"/>
</dbReference>
<dbReference type="InterPro" id="IPR036565">
    <property type="entry name" value="Mur-like_cat_sf"/>
</dbReference>
<dbReference type="InterPro" id="IPR004101">
    <property type="entry name" value="Mur_ligase_C"/>
</dbReference>
<dbReference type="InterPro" id="IPR036615">
    <property type="entry name" value="Mur_ligase_C_dom_sf"/>
</dbReference>
<dbReference type="InterPro" id="IPR013221">
    <property type="entry name" value="Mur_ligase_cen"/>
</dbReference>
<dbReference type="InterPro" id="IPR035911">
    <property type="entry name" value="MurE/MurF_N"/>
</dbReference>
<dbReference type="InterPro" id="IPR005761">
    <property type="entry name" value="UDP-N-AcMur-Glu-dNH2Pim_ligase"/>
</dbReference>
<dbReference type="NCBIfam" id="TIGR01085">
    <property type="entry name" value="murE"/>
    <property type="match status" value="1"/>
</dbReference>
<dbReference type="NCBIfam" id="NF010628">
    <property type="entry name" value="PRK14022.1"/>
    <property type="match status" value="1"/>
</dbReference>
<dbReference type="PANTHER" id="PTHR23135">
    <property type="entry name" value="MUR LIGASE FAMILY MEMBER"/>
    <property type="match status" value="1"/>
</dbReference>
<dbReference type="PANTHER" id="PTHR23135:SF4">
    <property type="entry name" value="UDP-N-ACETYLMURAMOYL-L-ALANYL-D-GLUTAMATE--2,6-DIAMINOPIMELATE LIGASE MURE HOMOLOG, CHLOROPLASTIC"/>
    <property type="match status" value="1"/>
</dbReference>
<dbReference type="Pfam" id="PF02875">
    <property type="entry name" value="Mur_ligase_C"/>
    <property type="match status" value="1"/>
</dbReference>
<dbReference type="Pfam" id="PF08245">
    <property type="entry name" value="Mur_ligase_M"/>
    <property type="match status" value="1"/>
</dbReference>
<dbReference type="SUPFAM" id="SSF53623">
    <property type="entry name" value="MurD-like peptide ligases, catalytic domain"/>
    <property type="match status" value="1"/>
</dbReference>
<dbReference type="SUPFAM" id="SSF53244">
    <property type="entry name" value="MurD-like peptide ligases, peptide-binding domain"/>
    <property type="match status" value="1"/>
</dbReference>
<dbReference type="SUPFAM" id="SSF63418">
    <property type="entry name" value="MurE/MurF N-terminal domain"/>
    <property type="match status" value="1"/>
</dbReference>
<feature type="chain" id="PRO_1000012392" description="UDP-N-acetylmuramoyl-L-alanyl-D-glutamate--L-lysine ligase">
    <location>
        <begin position="1"/>
        <end position="481"/>
    </location>
</feature>
<feature type="short sequence motif" description="L-lysine recognition motif">
    <location>
        <begin position="404"/>
        <end position="407"/>
    </location>
</feature>
<feature type="binding site" evidence="1">
    <location>
        <position position="42"/>
    </location>
    <ligand>
        <name>UDP-N-acetyl-alpha-D-muramoyl-L-alanyl-D-glutamate</name>
        <dbReference type="ChEBI" id="CHEBI:83900"/>
    </ligand>
</feature>
<feature type="binding site" evidence="1">
    <location>
        <begin position="118"/>
        <end position="124"/>
    </location>
    <ligand>
        <name>ATP</name>
        <dbReference type="ChEBI" id="CHEBI:30616"/>
    </ligand>
</feature>
<feature type="binding site" evidence="1">
    <location>
        <begin position="160"/>
        <end position="161"/>
    </location>
    <ligand>
        <name>UDP-N-acetyl-alpha-D-muramoyl-L-alanyl-D-glutamate</name>
        <dbReference type="ChEBI" id="CHEBI:83900"/>
    </ligand>
</feature>
<feature type="binding site" evidence="1">
    <location>
        <position position="187"/>
    </location>
    <ligand>
        <name>UDP-N-acetyl-alpha-D-muramoyl-L-alanyl-D-glutamate</name>
        <dbReference type="ChEBI" id="CHEBI:83900"/>
    </ligand>
</feature>
<feature type="binding site" evidence="1">
    <location>
        <position position="195"/>
    </location>
    <ligand>
        <name>UDP-N-acetyl-alpha-D-muramoyl-L-alanyl-D-glutamate</name>
        <dbReference type="ChEBI" id="CHEBI:83900"/>
    </ligand>
</feature>
<feature type="modified residue" description="N6-carboxylysine" evidence="1">
    <location>
        <position position="229"/>
    </location>
</feature>
<sequence length="481" mass="53210">MITIERVLEILKADANFRHIKQNDQTDSTWTDVQFDALSYDSRTVSPMTLFFAKGLAFKKEFLEKAIEAGLAFYVSEINYEVGIPAIIVHDIKQAMSLIAMEFHGHPQKQLKLLAFTGTKGKTTAAYFAFNILKQSKKPAMLSTMNTTLDGKTFFKSTLTTPESLDLFAMMAEAVKNGMTHLIMEVSSQAYLVKRVYGLTFDVGVFLNISPDHIGPIEHPTFEDYFYHKRLLMDNSRAVIVNAGMDHFEVVKEQVSSKDHDFYGPTSENQISQSAGFDFTATGKLAGHYDIQLIGGFNQENAIAAGLACLRLGASLEDIHTGIAQTNVPGRMEVLTQQNGAKVFVDYAHNGDSVKKLIDVVLEHQTGKVFLILGAPGNKGESRRKDFGLLLNDYPQIEVILTADDPNREDPAAIAEQIRAHMTRTSNFILDREEAIRTAMSQTSSPKDAVIIAGKGADAYQIVNGEKAAYDGDLEVAKQYL</sequence>
<protein>
    <recommendedName>
        <fullName evidence="1">UDP-N-acetylmuramoyl-L-alanyl-D-glutamate--L-lysine ligase</fullName>
        <ecNumber evidence="1">6.3.2.7</ecNumber>
    </recommendedName>
    <alternativeName>
        <fullName evidence="1">L-lysine-adding enzyme</fullName>
    </alternativeName>
    <alternativeName>
        <fullName evidence="1">UDP-MurNAc-L-Ala-D-Glu:L-Lys ligase</fullName>
    </alternativeName>
    <alternativeName>
        <fullName evidence="1">UDP-MurNAc-tripeptide synthetase</fullName>
    </alternativeName>
    <alternativeName>
        <fullName evidence="1">UDP-N-acetylmuramyl-tripeptide synthetase</fullName>
    </alternativeName>
</protein>
<comment type="function">
    <text evidence="1">Catalyzes the addition of L-lysine to the nucleotide precursor UDP-N-acetylmuramoyl-L-alanyl-D-glutamate (UMAG) in the biosynthesis of bacterial cell-wall peptidoglycan.</text>
</comment>
<comment type="catalytic activity">
    <reaction evidence="1">
        <text>UDP-N-acetyl-alpha-D-muramoyl-L-alanyl-D-glutamate + L-lysine + ATP = UDP-N-acetyl-alpha-D-muramoyl-L-alanyl-gamma-D-glutamyl-L-lysine + ADP + phosphate + H(+)</text>
        <dbReference type="Rhea" id="RHEA:17969"/>
        <dbReference type="ChEBI" id="CHEBI:15378"/>
        <dbReference type="ChEBI" id="CHEBI:30616"/>
        <dbReference type="ChEBI" id="CHEBI:32551"/>
        <dbReference type="ChEBI" id="CHEBI:43474"/>
        <dbReference type="ChEBI" id="CHEBI:83900"/>
        <dbReference type="ChEBI" id="CHEBI:83903"/>
        <dbReference type="ChEBI" id="CHEBI:456216"/>
        <dbReference type="EC" id="6.3.2.7"/>
    </reaction>
</comment>
<comment type="pathway">
    <text evidence="1">Cell wall biogenesis; peptidoglycan biosynthesis.</text>
</comment>
<comment type="subcellular location">
    <subcellularLocation>
        <location evidence="1">Cytoplasm</location>
    </subcellularLocation>
</comment>
<comment type="PTM">
    <text evidence="1">Carboxylation is probably crucial for Mg(2+) binding and, consequently, for the gamma-phosphate positioning of ATP.</text>
</comment>
<comment type="similarity">
    <text evidence="1">Belongs to the MurCDEF family. MurE subfamily.</text>
</comment>
<gene>
    <name evidence="1" type="primary">murE</name>
    <name type="ordered locus">SSU98_0652</name>
</gene>
<name>MURE_STRS2</name>
<accession>A4W0C1</accession>
<proteinExistence type="inferred from homology"/>